<name>YAJQ_SALCH</name>
<organism>
    <name type="scientific">Salmonella choleraesuis (strain SC-B67)</name>
    <dbReference type="NCBI Taxonomy" id="321314"/>
    <lineage>
        <taxon>Bacteria</taxon>
        <taxon>Pseudomonadati</taxon>
        <taxon>Pseudomonadota</taxon>
        <taxon>Gammaproteobacteria</taxon>
        <taxon>Enterobacterales</taxon>
        <taxon>Enterobacteriaceae</taxon>
        <taxon>Salmonella</taxon>
    </lineage>
</organism>
<reference key="1">
    <citation type="journal article" date="2005" name="Nucleic Acids Res.">
        <title>The genome sequence of Salmonella enterica serovar Choleraesuis, a highly invasive and resistant zoonotic pathogen.</title>
        <authorList>
            <person name="Chiu C.-H."/>
            <person name="Tang P."/>
            <person name="Chu C."/>
            <person name="Hu S."/>
            <person name="Bao Q."/>
            <person name="Yu J."/>
            <person name="Chou Y.-Y."/>
            <person name="Wang H.-S."/>
            <person name="Lee Y.-S."/>
        </authorList>
    </citation>
    <scope>NUCLEOTIDE SEQUENCE [LARGE SCALE GENOMIC DNA]</scope>
    <source>
        <strain>SC-B67</strain>
    </source>
</reference>
<evidence type="ECO:0000255" key="1">
    <source>
        <dbReference type="HAMAP-Rule" id="MF_00632"/>
    </source>
</evidence>
<keyword id="KW-0547">Nucleotide-binding</keyword>
<accession>Q57SC9</accession>
<comment type="function">
    <text evidence="1">Nucleotide-binding protein.</text>
</comment>
<comment type="similarity">
    <text evidence="1">Belongs to the YajQ family.</text>
</comment>
<sequence length="163" mass="18319">MPSFDIVSEVDLQEARNGVDNAVREVESRFDFRGVEATIELNDANKTIKVLSESDFQVNQLLDILRAKLLKRGIEGASLDVPDEFVHSGKTWYVEAKLKQGIESAVQKKIVKLIKDSKLKVQAQIQGEEIRVTGKSRDDLQSVMALVRGGDLGQPFQFKNFRD</sequence>
<dbReference type="EMBL" id="AE017220">
    <property type="protein sequence ID" value="AAX64382.1"/>
    <property type="molecule type" value="Genomic_DNA"/>
</dbReference>
<dbReference type="RefSeq" id="WP_001138913.1">
    <property type="nucleotide sequence ID" value="NC_006905.1"/>
</dbReference>
<dbReference type="SMR" id="Q57SC9"/>
<dbReference type="KEGG" id="sec:SCH_0476"/>
<dbReference type="HOGENOM" id="CLU_099839_1_0_6"/>
<dbReference type="Proteomes" id="UP000000538">
    <property type="component" value="Chromosome"/>
</dbReference>
<dbReference type="GO" id="GO:0005829">
    <property type="term" value="C:cytosol"/>
    <property type="evidence" value="ECO:0007669"/>
    <property type="project" value="TreeGrafter"/>
</dbReference>
<dbReference type="GO" id="GO:0000166">
    <property type="term" value="F:nucleotide binding"/>
    <property type="evidence" value="ECO:0007669"/>
    <property type="project" value="TreeGrafter"/>
</dbReference>
<dbReference type="CDD" id="cd11740">
    <property type="entry name" value="YajQ_like"/>
    <property type="match status" value="1"/>
</dbReference>
<dbReference type="FunFam" id="3.30.70.860:FF:000001">
    <property type="entry name" value="UPF0234 protein YajQ"/>
    <property type="match status" value="1"/>
</dbReference>
<dbReference type="FunFam" id="3.30.70.990:FF:000001">
    <property type="entry name" value="UPF0234 protein YajQ"/>
    <property type="match status" value="1"/>
</dbReference>
<dbReference type="Gene3D" id="3.30.70.860">
    <property type="match status" value="1"/>
</dbReference>
<dbReference type="Gene3D" id="3.30.70.990">
    <property type="entry name" value="YajQ-like, domain 2"/>
    <property type="match status" value="1"/>
</dbReference>
<dbReference type="HAMAP" id="MF_00632">
    <property type="entry name" value="YajQ"/>
    <property type="match status" value="1"/>
</dbReference>
<dbReference type="InterPro" id="IPR007551">
    <property type="entry name" value="DUF520"/>
</dbReference>
<dbReference type="InterPro" id="IPR035571">
    <property type="entry name" value="UPF0234-like_C"/>
</dbReference>
<dbReference type="InterPro" id="IPR035570">
    <property type="entry name" value="UPF0234_N"/>
</dbReference>
<dbReference type="InterPro" id="IPR036183">
    <property type="entry name" value="YajQ-like_sf"/>
</dbReference>
<dbReference type="NCBIfam" id="NF003819">
    <property type="entry name" value="PRK05412.1"/>
    <property type="match status" value="1"/>
</dbReference>
<dbReference type="PANTHER" id="PTHR30476">
    <property type="entry name" value="UPF0234 PROTEIN YAJQ"/>
    <property type="match status" value="1"/>
</dbReference>
<dbReference type="PANTHER" id="PTHR30476:SF0">
    <property type="entry name" value="UPF0234 PROTEIN YAJQ"/>
    <property type="match status" value="1"/>
</dbReference>
<dbReference type="Pfam" id="PF04461">
    <property type="entry name" value="DUF520"/>
    <property type="match status" value="1"/>
</dbReference>
<dbReference type="SUPFAM" id="SSF89963">
    <property type="entry name" value="YajQ-like"/>
    <property type="match status" value="2"/>
</dbReference>
<protein>
    <recommendedName>
        <fullName evidence="1">Nucleotide-binding protein YajQ</fullName>
    </recommendedName>
</protein>
<proteinExistence type="inferred from homology"/>
<gene>
    <name evidence="1" type="primary">yajQ</name>
    <name type="ordered locus">SCH_0476</name>
</gene>
<feature type="chain" id="PRO_0000261970" description="Nucleotide-binding protein YajQ">
    <location>
        <begin position="1"/>
        <end position="163"/>
    </location>
</feature>